<reference key="1">
    <citation type="journal article" date="1997" name="Mol. Microbiol.">
        <title>Aminoglycoside 2'-N-acetyltransferase genes are universally present in mycobacteria: characterization of the aac(2')-Ic gene from Mycobacterium tuberculosis and the aac(2')-Id gene from Mycobacterium smegmatis.</title>
        <authorList>
            <person name="Ainsa J.A."/>
            <person name="Perez E."/>
            <person name="Pelicic V."/>
            <person name="Berthet F.-X."/>
            <person name="Gicquel B."/>
            <person name="Martin C."/>
        </authorList>
    </citation>
    <scope>NUCLEOTIDE SEQUENCE [GENOMIC DNA]</scope>
    <scope>FUNCTION</scope>
    <source>
        <strain>ATCC 25618 / H37Rv</strain>
    </source>
</reference>
<reference key="2">
    <citation type="journal article" date="1998" name="Nature">
        <title>Deciphering the biology of Mycobacterium tuberculosis from the complete genome sequence.</title>
        <authorList>
            <person name="Cole S.T."/>
            <person name="Brosch R."/>
            <person name="Parkhill J."/>
            <person name="Garnier T."/>
            <person name="Churcher C.M."/>
            <person name="Harris D.E."/>
            <person name="Gordon S.V."/>
            <person name="Eiglmeier K."/>
            <person name="Gas S."/>
            <person name="Barry C.E. III"/>
            <person name="Tekaia F."/>
            <person name="Badcock K."/>
            <person name="Basham D."/>
            <person name="Brown D."/>
            <person name="Chillingworth T."/>
            <person name="Connor R."/>
            <person name="Davies R.M."/>
            <person name="Devlin K."/>
            <person name="Feltwell T."/>
            <person name="Gentles S."/>
            <person name="Hamlin N."/>
            <person name="Holroyd S."/>
            <person name="Hornsby T."/>
            <person name="Jagels K."/>
            <person name="Krogh A."/>
            <person name="McLean J."/>
            <person name="Moule S."/>
            <person name="Murphy L.D."/>
            <person name="Oliver S."/>
            <person name="Osborne J."/>
            <person name="Quail M.A."/>
            <person name="Rajandream M.A."/>
            <person name="Rogers J."/>
            <person name="Rutter S."/>
            <person name="Seeger K."/>
            <person name="Skelton S."/>
            <person name="Squares S."/>
            <person name="Squares R."/>
            <person name="Sulston J.E."/>
            <person name="Taylor K."/>
            <person name="Whitehead S."/>
            <person name="Barrell B.G."/>
        </authorList>
    </citation>
    <scope>NUCLEOTIDE SEQUENCE [LARGE SCALE GENOMIC DNA]</scope>
    <source>
        <strain>ATCC 25618 / H37Rv</strain>
    </source>
</reference>
<reference key="3">
    <citation type="journal article" date="2011" name="Mol. Cell. Proteomics">
        <title>Proteogenomic analysis of Mycobacterium tuberculosis by high resolution mass spectrometry.</title>
        <authorList>
            <person name="Kelkar D.S."/>
            <person name="Kumar D."/>
            <person name="Kumar P."/>
            <person name="Balakrishnan L."/>
            <person name="Muthusamy B."/>
            <person name="Yadav A.K."/>
            <person name="Shrivastava P."/>
            <person name="Marimuthu A."/>
            <person name="Anand S."/>
            <person name="Sundaram H."/>
            <person name="Kingsbury R."/>
            <person name="Harsha H.C."/>
            <person name="Nair B."/>
            <person name="Prasad T.S."/>
            <person name="Chauhan D.S."/>
            <person name="Katoch K."/>
            <person name="Katoch V.M."/>
            <person name="Kumar P."/>
            <person name="Chaerkady R."/>
            <person name="Ramachandran S."/>
            <person name="Dash D."/>
            <person name="Pandey A."/>
        </authorList>
    </citation>
    <scope>IDENTIFICATION BY MASS SPECTROMETRY [LARGE SCALE ANALYSIS]</scope>
    <source>
        <strain>ATCC 25618 / H37Rv</strain>
    </source>
</reference>
<reference key="4">
    <citation type="journal article" date="2002" name="Nat. Struct. Biol.">
        <title>Aminoglycoside 2'-N-acetyltransferase from Mycobacterium tuberculosis in complex with coenzyme A and aminoglycoside substrates.</title>
        <authorList>
            <person name="Vetting M.W."/>
            <person name="Hegde S.S."/>
            <person name="Javid-Majd F."/>
            <person name="Blanchard J.S."/>
            <person name="Roderick S.L."/>
        </authorList>
    </citation>
    <scope>X-RAY CRYSTALLOGRAPHY (1.6 ANGSTROMS) IN COMPLEXES WITH COENZYME A; RIBOSTAMYCIN; KANAMYCIN AND TOBRAMYCIN</scope>
    <scope>SUBUNIT</scope>
</reference>
<comment type="function">
    <text evidence="1 4">May catalyze the coenzyme A-dependent acetylation of the 2' hydroxyl or amino group of a broad spectrum of aminoglycosides and confer resistance to aminoglycosides (By similarity). In vitro assays show no significant increase of resistance to aminoglycosides, possibly due to low expression in a heterologous system (PubMed:9159528).</text>
</comment>
<comment type="subunit">
    <text evidence="3">Homodimer.</text>
</comment>
<comment type="similarity">
    <text evidence="6">Belongs to the AAC(2')-I acetyltransferase family.</text>
</comment>
<proteinExistence type="evidence at protein level"/>
<name>AAC2_MYCTU</name>
<sequence>MHTQVHTARLVHTADLDSETRQDIRQMVTGAFAGDFTETDWEHTLGGMHALIWHHGAIIAHAAVIQRRLIYRGNALRCGYVEGVAVRADWRGQRLVSALLDAVEQVMRGAYQLGALSSSARARRLYASRGWLPWHGPTSVLAPTGPVRTPDDDGTVFVLPIDISLDTSAELMCDWRAGDVW</sequence>
<feature type="chain" id="PRO_0000064412" description="Aminoglycoside 2'-N-acetyltransferase">
    <location>
        <begin position="1"/>
        <end position="181"/>
    </location>
</feature>
<feature type="domain" description="N-acetyltransferase" evidence="2">
    <location>
        <begin position="11"/>
        <end position="162"/>
    </location>
</feature>
<feature type="binding site" evidence="7">
    <location>
        <position position="35"/>
    </location>
    <ligand>
        <name>substrate</name>
    </ligand>
</feature>
<feature type="binding site">
    <location>
        <begin position="82"/>
        <end position="83"/>
    </location>
    <ligand>
        <name>substrate</name>
    </ligand>
</feature>
<feature type="binding site" evidence="3 8 9 10">
    <location>
        <begin position="84"/>
        <end position="86"/>
    </location>
    <ligand>
        <name>CoA</name>
        <dbReference type="ChEBI" id="CHEBI:57287"/>
    </ligand>
</feature>
<feature type="binding site" evidence="3 8 9 10">
    <location>
        <begin position="91"/>
        <end position="96"/>
    </location>
    <ligand>
        <name>CoA</name>
        <dbReference type="ChEBI" id="CHEBI:57287"/>
    </ligand>
</feature>
<feature type="binding site" evidence="7">
    <location>
        <position position="117"/>
    </location>
    <ligand>
        <name>substrate</name>
    </ligand>
</feature>
<feature type="binding site" evidence="7">
    <location>
        <begin position="151"/>
        <end position="152"/>
    </location>
    <ligand>
        <name>substrate</name>
    </ligand>
</feature>
<feature type="strand" evidence="11">
    <location>
        <begin position="9"/>
        <end position="12"/>
    </location>
</feature>
<feature type="helix" evidence="11">
    <location>
        <begin position="13"/>
        <end position="15"/>
    </location>
</feature>
<feature type="helix" evidence="11">
    <location>
        <begin position="18"/>
        <end position="31"/>
    </location>
</feature>
<feature type="turn" evidence="11">
    <location>
        <begin position="32"/>
        <end position="34"/>
    </location>
</feature>
<feature type="helix" evidence="11">
    <location>
        <begin position="38"/>
        <end position="43"/>
    </location>
</feature>
<feature type="strand" evidence="11">
    <location>
        <begin position="46"/>
        <end position="54"/>
    </location>
</feature>
<feature type="strand" evidence="11">
    <location>
        <begin position="57"/>
        <end position="71"/>
    </location>
</feature>
<feature type="strand" evidence="11">
    <location>
        <begin position="74"/>
        <end position="86"/>
    </location>
</feature>
<feature type="helix" evidence="11">
    <location>
        <begin position="88"/>
        <end position="90"/>
    </location>
</feature>
<feature type="helix" evidence="11">
    <location>
        <begin position="95"/>
        <end position="110"/>
    </location>
</feature>
<feature type="strand" evidence="11">
    <location>
        <begin position="112"/>
        <end position="117"/>
    </location>
</feature>
<feature type="turn" evidence="11">
    <location>
        <begin position="120"/>
        <end position="122"/>
    </location>
</feature>
<feature type="helix" evidence="11">
    <location>
        <begin position="123"/>
        <end position="128"/>
    </location>
</feature>
<feature type="strand" evidence="11">
    <location>
        <begin position="138"/>
        <end position="142"/>
    </location>
</feature>
<feature type="strand" evidence="11">
    <location>
        <begin position="145"/>
        <end position="148"/>
    </location>
</feature>
<feature type="helix" evidence="11">
    <location>
        <begin position="150"/>
        <end position="152"/>
    </location>
</feature>
<feature type="turn" evidence="11">
    <location>
        <begin position="153"/>
        <end position="155"/>
    </location>
</feature>
<feature type="strand" evidence="11">
    <location>
        <begin position="156"/>
        <end position="162"/>
    </location>
</feature>
<feature type="strand" evidence="11">
    <location>
        <begin position="171"/>
        <end position="174"/>
    </location>
</feature>
<protein>
    <recommendedName>
        <fullName>Aminoglycoside 2'-N-acetyltransferase</fullName>
        <ecNumber>2.3.1.-</ecNumber>
    </recommendedName>
    <alternativeName>
        <fullName evidence="5">AAC(2')-Ic</fullName>
    </alternativeName>
</protein>
<accession>P9WQG9</accession>
<accession>L0T655</accession>
<accession>P0A5N0</accession>
<accession>P72033</accession>
<accession>P95219</accession>
<dbReference type="EC" id="2.3.1.-"/>
<dbReference type="EMBL" id="U72714">
    <property type="protein sequence ID" value="AAB17563.1"/>
    <property type="molecule type" value="Genomic_DNA"/>
</dbReference>
<dbReference type="EMBL" id="AL123456">
    <property type="protein sequence ID" value="CCP42991.1"/>
    <property type="molecule type" value="Genomic_DNA"/>
</dbReference>
<dbReference type="PIR" id="A70627">
    <property type="entry name" value="A70627"/>
</dbReference>
<dbReference type="RefSeq" id="NP_214776.1">
    <property type="nucleotide sequence ID" value="NC_000962.3"/>
</dbReference>
<dbReference type="PDB" id="1M44">
    <property type="method" value="X-ray"/>
    <property type="resolution" value="1.60 A"/>
    <property type="chains" value="A/B=1-181"/>
</dbReference>
<dbReference type="PDB" id="1M4D">
    <property type="method" value="X-ray"/>
    <property type="resolution" value="1.80 A"/>
    <property type="chains" value="A/B=1-181"/>
</dbReference>
<dbReference type="PDB" id="1M4G">
    <property type="method" value="X-ray"/>
    <property type="resolution" value="1.80 A"/>
    <property type="chains" value="A/B=1-181"/>
</dbReference>
<dbReference type="PDB" id="1M4I">
    <property type="method" value="X-ray"/>
    <property type="resolution" value="1.50 A"/>
    <property type="chains" value="A/B=1-181"/>
</dbReference>
<dbReference type="PDBsum" id="1M44"/>
<dbReference type="PDBsum" id="1M4D"/>
<dbReference type="PDBsum" id="1M4G"/>
<dbReference type="PDBsum" id="1M4I"/>
<dbReference type="SMR" id="P9WQG9"/>
<dbReference type="STRING" id="83332.Rv0262c"/>
<dbReference type="ChEMBL" id="CHEMBL3708053"/>
<dbReference type="DrugBank" id="DB01842">
    <property type="generic name" value="3'-Phosphate-Adenosine-5'-Diphosphate"/>
</dbReference>
<dbReference type="DrugBank" id="DB01992">
    <property type="generic name" value="Coenzyme A"/>
</dbReference>
<dbReference type="DrugBank" id="DB01172">
    <property type="generic name" value="Kanamycin"/>
</dbReference>
<dbReference type="DrugBank" id="DB03615">
    <property type="generic name" value="Ribostamycin"/>
</dbReference>
<dbReference type="CARD" id="ARO:3002525">
    <property type="molecule name" value="AAC(2')-Ic"/>
    <property type="mechanism identifier" value="ARO:0001004"/>
    <property type="mechanism name" value="antibiotic inactivation"/>
</dbReference>
<dbReference type="PaxDb" id="83332-Rv0262c"/>
<dbReference type="DNASU" id="886648"/>
<dbReference type="GeneID" id="886648"/>
<dbReference type="KEGG" id="ag:AAB17563"/>
<dbReference type="KEGG" id="mtu:Rv0262c"/>
<dbReference type="KEGG" id="mtv:RVBD_0262c"/>
<dbReference type="TubercuList" id="Rv0262c"/>
<dbReference type="eggNOG" id="COG0456">
    <property type="taxonomic scope" value="Bacteria"/>
</dbReference>
<dbReference type="InParanoid" id="P9WQG9"/>
<dbReference type="OrthoDB" id="70281at2"/>
<dbReference type="EvolutionaryTrace" id="P9WQG9"/>
<dbReference type="Proteomes" id="UP000001584">
    <property type="component" value="Chromosome"/>
</dbReference>
<dbReference type="GO" id="GO:0005886">
    <property type="term" value="C:plasma membrane"/>
    <property type="evidence" value="ECO:0007005"/>
    <property type="project" value="MTBBASE"/>
</dbReference>
<dbReference type="GO" id="GO:0047921">
    <property type="term" value="F:aminoglycoside 2'-N-acetyltransferase activity"/>
    <property type="evidence" value="ECO:0000314"/>
    <property type="project" value="MTBBASE"/>
</dbReference>
<dbReference type="GO" id="GO:0034069">
    <property type="term" value="F:aminoglycoside N-acetyltransferase activity"/>
    <property type="evidence" value="ECO:0000314"/>
    <property type="project" value="MTBBASE"/>
</dbReference>
<dbReference type="GO" id="GO:0030649">
    <property type="term" value="P:aminoglycoside antibiotic catabolic process"/>
    <property type="evidence" value="ECO:0000314"/>
    <property type="project" value="MTBBASE"/>
</dbReference>
<dbReference type="GO" id="GO:0046677">
    <property type="term" value="P:response to antibiotic"/>
    <property type="evidence" value="ECO:0007669"/>
    <property type="project" value="UniProtKB-KW"/>
</dbReference>
<dbReference type="CDD" id="cd04301">
    <property type="entry name" value="NAT_SF"/>
    <property type="match status" value="1"/>
</dbReference>
<dbReference type="FunFam" id="3.40.630.30:FF:000149">
    <property type="entry name" value="Aminoglycoside 2'-N-acetyltransferase AAC (AAC(2')-IC)"/>
    <property type="match status" value="1"/>
</dbReference>
<dbReference type="Gene3D" id="3.40.630.30">
    <property type="match status" value="1"/>
</dbReference>
<dbReference type="InterPro" id="IPR016181">
    <property type="entry name" value="Acyl_CoA_acyltransferase"/>
</dbReference>
<dbReference type="InterPro" id="IPR000182">
    <property type="entry name" value="GNAT_dom"/>
</dbReference>
<dbReference type="NCBIfam" id="NF000034">
    <property type="entry name" value="AAC_2p_Ic"/>
    <property type="match status" value="1"/>
</dbReference>
<dbReference type="Pfam" id="PF13527">
    <property type="entry name" value="Acetyltransf_9"/>
    <property type="match status" value="1"/>
</dbReference>
<dbReference type="SUPFAM" id="SSF55729">
    <property type="entry name" value="Acyl-CoA N-acyltransferases (Nat)"/>
    <property type="match status" value="1"/>
</dbReference>
<dbReference type="PROSITE" id="PS51186">
    <property type="entry name" value="GNAT"/>
    <property type="match status" value="1"/>
</dbReference>
<keyword id="KW-0002">3D-structure</keyword>
<keyword id="KW-0012">Acyltransferase</keyword>
<keyword id="KW-0046">Antibiotic resistance</keyword>
<keyword id="KW-1185">Reference proteome</keyword>
<keyword id="KW-0808">Transferase</keyword>
<gene>
    <name type="primary">aac</name>
    <name type="ordered locus">Rv0262c</name>
    <name type="ORF">MTCY06A4.06c</name>
</gene>
<organism>
    <name type="scientific">Mycobacterium tuberculosis (strain ATCC 25618 / H37Rv)</name>
    <dbReference type="NCBI Taxonomy" id="83332"/>
    <lineage>
        <taxon>Bacteria</taxon>
        <taxon>Bacillati</taxon>
        <taxon>Actinomycetota</taxon>
        <taxon>Actinomycetes</taxon>
        <taxon>Mycobacteriales</taxon>
        <taxon>Mycobacteriaceae</taxon>
        <taxon>Mycobacterium</taxon>
        <taxon>Mycobacterium tuberculosis complex</taxon>
    </lineage>
</organism>
<evidence type="ECO:0000250" key="1">
    <source>
        <dbReference type="UniProtKB" id="P94968"/>
    </source>
</evidence>
<evidence type="ECO:0000255" key="2">
    <source>
        <dbReference type="PROSITE-ProRule" id="PRU00532"/>
    </source>
</evidence>
<evidence type="ECO:0000269" key="3">
    <source>
    </source>
</evidence>
<evidence type="ECO:0000269" key="4">
    <source>
    </source>
</evidence>
<evidence type="ECO:0000303" key="5">
    <source>
    </source>
</evidence>
<evidence type="ECO:0000305" key="6"/>
<evidence type="ECO:0000305" key="7">
    <source>
    </source>
</evidence>
<evidence type="ECO:0007744" key="8">
    <source>
        <dbReference type="PDB" id="1M4D"/>
    </source>
</evidence>
<evidence type="ECO:0007744" key="9">
    <source>
        <dbReference type="PDB" id="1M4G"/>
    </source>
</evidence>
<evidence type="ECO:0007744" key="10">
    <source>
        <dbReference type="PDB" id="1M4I"/>
    </source>
</evidence>
<evidence type="ECO:0007829" key="11">
    <source>
        <dbReference type="PDB" id="1M4I"/>
    </source>
</evidence>